<name>RS27A_SULTO</name>
<proteinExistence type="inferred from homology"/>
<evidence type="ECO:0000255" key="1">
    <source>
        <dbReference type="HAMAP-Rule" id="MF_00777"/>
    </source>
</evidence>
<evidence type="ECO:0000305" key="2"/>
<reference key="1">
    <citation type="journal article" date="2001" name="DNA Res.">
        <title>Complete genome sequence of an aerobic thermoacidophilic Crenarchaeon, Sulfolobus tokodaii strain7.</title>
        <authorList>
            <person name="Kawarabayasi Y."/>
            <person name="Hino Y."/>
            <person name="Horikawa H."/>
            <person name="Jin-no K."/>
            <person name="Takahashi M."/>
            <person name="Sekine M."/>
            <person name="Baba S."/>
            <person name="Ankai A."/>
            <person name="Kosugi H."/>
            <person name="Hosoyama A."/>
            <person name="Fukui S."/>
            <person name="Nagai Y."/>
            <person name="Nishijima K."/>
            <person name="Otsuka R."/>
            <person name="Nakazawa H."/>
            <person name="Takamiya M."/>
            <person name="Kato Y."/>
            <person name="Yoshizawa T."/>
            <person name="Tanaka T."/>
            <person name="Kudoh Y."/>
            <person name="Yamazaki J."/>
            <person name="Kushida N."/>
            <person name="Oguchi A."/>
            <person name="Aoki K."/>
            <person name="Masuda S."/>
            <person name="Yanagii M."/>
            <person name="Nishimura M."/>
            <person name="Yamagishi A."/>
            <person name="Oshima T."/>
            <person name="Kikuchi H."/>
        </authorList>
    </citation>
    <scope>NUCLEOTIDE SEQUENCE [LARGE SCALE GENOMIC DNA]</scope>
    <source>
        <strain>DSM 16993 / JCM 10545 / NBRC 100140 / 7</strain>
    </source>
</reference>
<keyword id="KW-0479">Metal-binding</keyword>
<keyword id="KW-1185">Reference proteome</keyword>
<keyword id="KW-0687">Ribonucleoprotein</keyword>
<keyword id="KW-0689">Ribosomal protein</keyword>
<keyword id="KW-0862">Zinc</keyword>
<keyword id="KW-0863">Zinc-finger</keyword>
<dbReference type="EMBL" id="BA000023">
    <property type="protein sequence ID" value="BAK54249.1"/>
    <property type="molecule type" value="Genomic_DNA"/>
</dbReference>
<dbReference type="SMR" id="Q975Q8"/>
<dbReference type="STRING" id="273063.STK_03625"/>
<dbReference type="KEGG" id="sto:STK_03625"/>
<dbReference type="PATRIC" id="fig|273063.9.peg.422"/>
<dbReference type="eggNOG" id="arCOG04183">
    <property type="taxonomic scope" value="Archaea"/>
</dbReference>
<dbReference type="Proteomes" id="UP000001015">
    <property type="component" value="Chromosome"/>
</dbReference>
<dbReference type="GO" id="GO:1990904">
    <property type="term" value="C:ribonucleoprotein complex"/>
    <property type="evidence" value="ECO:0007669"/>
    <property type="project" value="UniProtKB-KW"/>
</dbReference>
<dbReference type="GO" id="GO:0005840">
    <property type="term" value="C:ribosome"/>
    <property type="evidence" value="ECO:0007669"/>
    <property type="project" value="UniProtKB-KW"/>
</dbReference>
<dbReference type="GO" id="GO:0003735">
    <property type="term" value="F:structural constituent of ribosome"/>
    <property type="evidence" value="ECO:0007669"/>
    <property type="project" value="InterPro"/>
</dbReference>
<dbReference type="GO" id="GO:0008270">
    <property type="term" value="F:zinc ion binding"/>
    <property type="evidence" value="ECO:0007669"/>
    <property type="project" value="UniProtKB-UniRule"/>
</dbReference>
<dbReference type="GO" id="GO:0006412">
    <property type="term" value="P:translation"/>
    <property type="evidence" value="ECO:0007669"/>
    <property type="project" value="UniProtKB-UniRule"/>
</dbReference>
<dbReference type="Gene3D" id="6.20.50.180">
    <property type="match status" value="1"/>
</dbReference>
<dbReference type="HAMAP" id="MF_00777">
    <property type="entry name" value="Ribosomal_eS31"/>
    <property type="match status" value="1"/>
</dbReference>
<dbReference type="InterPro" id="IPR002906">
    <property type="entry name" value="Ribosomal_eS31"/>
</dbReference>
<dbReference type="InterPro" id="IPR022845">
    <property type="entry name" value="Ribosomal_eS31_arc"/>
</dbReference>
<dbReference type="InterPro" id="IPR011332">
    <property type="entry name" value="Ribosomal_zn-bd"/>
</dbReference>
<dbReference type="NCBIfam" id="NF001669">
    <property type="entry name" value="PRK00432.1"/>
    <property type="match status" value="1"/>
</dbReference>
<dbReference type="Pfam" id="PF01599">
    <property type="entry name" value="Ribosomal_S27"/>
    <property type="match status" value="1"/>
</dbReference>
<dbReference type="SMART" id="SM01402">
    <property type="entry name" value="Ribosomal_S27"/>
    <property type="match status" value="1"/>
</dbReference>
<dbReference type="SUPFAM" id="SSF57829">
    <property type="entry name" value="Zn-binding ribosomal proteins"/>
    <property type="match status" value="1"/>
</dbReference>
<organism>
    <name type="scientific">Sulfurisphaera tokodaii (strain DSM 16993 / JCM 10545 / NBRC 100140 / 7)</name>
    <name type="common">Sulfolobus tokodaii</name>
    <dbReference type="NCBI Taxonomy" id="273063"/>
    <lineage>
        <taxon>Archaea</taxon>
        <taxon>Thermoproteota</taxon>
        <taxon>Thermoprotei</taxon>
        <taxon>Sulfolobales</taxon>
        <taxon>Sulfolobaceae</taxon>
        <taxon>Sulfurisphaera</taxon>
    </lineage>
</organism>
<protein>
    <recommendedName>
        <fullName evidence="1">Small ribosomal subunit protein eS31</fullName>
    </recommendedName>
    <alternativeName>
        <fullName evidence="2">30S ribosomal protein S27ae</fullName>
    </alternativeName>
</protein>
<sequence>MPKNKDESQKAIVRTYYIIEGDKIKLKNKKCPRCGSIMAHHMKPVERWACGKCGYTEFIGKGK</sequence>
<gene>
    <name evidence="1" type="primary">rps27ae</name>
    <name type="ordered locus">STK_03625</name>
    <name type="ORF">STS051</name>
</gene>
<accession>Q975Q8</accession>
<accession>F9VMV2</accession>
<feature type="chain" id="PRO_0000137708" description="Small ribosomal subunit protein eS31">
    <location>
        <begin position="1"/>
        <end position="63"/>
    </location>
</feature>
<feature type="zinc finger region" description="C4-type" evidence="1">
    <location>
        <begin position="31"/>
        <end position="53"/>
    </location>
</feature>
<feature type="binding site" evidence="1">
    <location>
        <position position="31"/>
    </location>
    <ligand>
        <name>Zn(2+)</name>
        <dbReference type="ChEBI" id="CHEBI:29105"/>
    </ligand>
</feature>
<feature type="binding site" evidence="1">
    <location>
        <position position="34"/>
    </location>
    <ligand>
        <name>Zn(2+)</name>
        <dbReference type="ChEBI" id="CHEBI:29105"/>
    </ligand>
</feature>
<feature type="binding site" evidence="1">
    <location>
        <position position="50"/>
    </location>
    <ligand>
        <name>Zn(2+)</name>
        <dbReference type="ChEBI" id="CHEBI:29105"/>
    </ligand>
</feature>
<feature type="binding site" evidence="1">
    <location>
        <position position="53"/>
    </location>
    <ligand>
        <name>Zn(2+)</name>
        <dbReference type="ChEBI" id="CHEBI:29105"/>
    </ligand>
</feature>
<comment type="cofactor">
    <cofactor evidence="1">
        <name>Zn(2+)</name>
        <dbReference type="ChEBI" id="CHEBI:29105"/>
    </cofactor>
    <text evidence="1">Binds 1 zinc ion per subunit.</text>
</comment>
<comment type="subunit">
    <text evidence="1">Part of the 30S ribosomal subunit.</text>
</comment>
<comment type="similarity">
    <text evidence="1">Belongs to the eukaryotic ribosomal protein eS31 family.</text>
</comment>